<gene>
    <name type="primary">mprB</name>
    <name type="ordered locus">Mvan_4843</name>
</gene>
<protein>
    <recommendedName>
        <fullName>Signal transduction histidine-protein kinase/phosphatase MprB</fullName>
        <ecNumber>2.7.13.3</ecNumber>
        <ecNumber>3.1.3.-</ecNumber>
    </recommendedName>
    <alternativeName>
        <fullName>Mycobacterial persistence regulator B</fullName>
    </alternativeName>
</protein>
<organism>
    <name type="scientific">Mycolicibacterium vanbaalenii (strain DSM 7251 / JCM 13017 / BCRC 16820 / KCTC 9966 / NRRL B-24157 / PYR-1)</name>
    <name type="common">Mycobacterium vanbaalenii</name>
    <dbReference type="NCBI Taxonomy" id="350058"/>
    <lineage>
        <taxon>Bacteria</taxon>
        <taxon>Bacillati</taxon>
        <taxon>Actinomycetota</taxon>
        <taxon>Actinomycetes</taxon>
        <taxon>Mycobacteriales</taxon>
        <taxon>Mycobacteriaceae</taxon>
        <taxon>Mycolicibacterium</taxon>
    </lineage>
</organism>
<comment type="function">
    <text evidence="1">Member of the two-component regulatory system MprB/MprA which contributes to maintaining a balance among several systems involved in stress resistance and is required for establishment and maintenance of persistent infection in the host. In response to environmental signals MprB acts both as a membrane-associated protein kinase that undergoes autophosphorylation and subsequently transfers the phosphate to MprA, and a protein phosphatase that dephosphorylates phospho-MprA (By similarity).</text>
</comment>
<comment type="catalytic activity">
    <reaction>
        <text>ATP + protein L-histidine = ADP + protein N-phospho-L-histidine.</text>
        <dbReference type="EC" id="2.7.13.3"/>
    </reaction>
</comment>
<comment type="cofactor">
    <cofactor evidence="1">
        <name>Mg(2+)</name>
        <dbReference type="ChEBI" id="CHEBI:18420"/>
    </cofactor>
    <cofactor evidence="1">
        <name>Mn(2+)</name>
        <dbReference type="ChEBI" id="CHEBI:29035"/>
    </cofactor>
</comment>
<comment type="subcellular location">
    <subcellularLocation>
        <location evidence="6">Cell membrane</location>
        <topology evidence="6">Multi-pass membrane protein</topology>
    </subcellularLocation>
</comment>
<comment type="PTM">
    <text evidence="1">Autophosphorylated.</text>
</comment>
<reference key="1">
    <citation type="submission" date="2006-12" db="EMBL/GenBank/DDBJ databases">
        <title>Complete sequence of Mycobacterium vanbaalenii PYR-1.</title>
        <authorList>
            <consortium name="US DOE Joint Genome Institute"/>
            <person name="Copeland A."/>
            <person name="Lucas S."/>
            <person name="Lapidus A."/>
            <person name="Barry K."/>
            <person name="Detter J.C."/>
            <person name="Glavina del Rio T."/>
            <person name="Hammon N."/>
            <person name="Israni S."/>
            <person name="Dalin E."/>
            <person name="Tice H."/>
            <person name="Pitluck S."/>
            <person name="Singan V."/>
            <person name="Schmutz J."/>
            <person name="Larimer F."/>
            <person name="Land M."/>
            <person name="Hauser L."/>
            <person name="Kyrpides N."/>
            <person name="Anderson I.J."/>
            <person name="Miller C."/>
            <person name="Richardson P."/>
        </authorList>
    </citation>
    <scope>NUCLEOTIDE SEQUENCE [LARGE SCALE GENOMIC DNA]</scope>
    <source>
        <strain>DSM 7251 / JCM 13017 / BCRC 16820 / KCTC 9966 / NRRL B-24157 / PYR-1</strain>
    </source>
</reference>
<dbReference type="EC" id="2.7.13.3"/>
<dbReference type="EC" id="3.1.3.-"/>
<dbReference type="EMBL" id="CP000511">
    <property type="protein sequence ID" value="ABM15616.1"/>
    <property type="molecule type" value="Genomic_DNA"/>
</dbReference>
<dbReference type="RefSeq" id="WP_011781990.1">
    <property type="nucleotide sequence ID" value="NZ_JACKSD010000270.1"/>
</dbReference>
<dbReference type="SMR" id="A1TEL6"/>
<dbReference type="STRING" id="350058.Mvan_4843"/>
<dbReference type="KEGG" id="mva:Mvan_4843"/>
<dbReference type="eggNOG" id="COG2205">
    <property type="taxonomic scope" value="Bacteria"/>
</dbReference>
<dbReference type="HOGENOM" id="CLU_000445_89_6_11"/>
<dbReference type="Proteomes" id="UP000009159">
    <property type="component" value="Chromosome"/>
</dbReference>
<dbReference type="GO" id="GO:0005886">
    <property type="term" value="C:plasma membrane"/>
    <property type="evidence" value="ECO:0007669"/>
    <property type="project" value="UniProtKB-SubCell"/>
</dbReference>
<dbReference type="GO" id="GO:0005524">
    <property type="term" value="F:ATP binding"/>
    <property type="evidence" value="ECO:0007669"/>
    <property type="project" value="UniProtKB-KW"/>
</dbReference>
<dbReference type="GO" id="GO:0004721">
    <property type="term" value="F:phosphoprotein phosphatase activity"/>
    <property type="evidence" value="ECO:0007669"/>
    <property type="project" value="UniProtKB-KW"/>
</dbReference>
<dbReference type="GO" id="GO:0000155">
    <property type="term" value="F:phosphorelay sensor kinase activity"/>
    <property type="evidence" value="ECO:0007669"/>
    <property type="project" value="InterPro"/>
</dbReference>
<dbReference type="CDD" id="cd06225">
    <property type="entry name" value="HAMP"/>
    <property type="match status" value="1"/>
</dbReference>
<dbReference type="CDD" id="cd00075">
    <property type="entry name" value="HATPase"/>
    <property type="match status" value="1"/>
</dbReference>
<dbReference type="CDD" id="cd00082">
    <property type="entry name" value="HisKA"/>
    <property type="match status" value="1"/>
</dbReference>
<dbReference type="FunFam" id="3.30.565.10:FF:000066">
    <property type="entry name" value="Two-component sensor kinase MprB"/>
    <property type="match status" value="1"/>
</dbReference>
<dbReference type="Gene3D" id="1.10.287.130">
    <property type="match status" value="1"/>
</dbReference>
<dbReference type="Gene3D" id="6.10.340.10">
    <property type="match status" value="1"/>
</dbReference>
<dbReference type="Gene3D" id="3.30.565.10">
    <property type="entry name" value="Histidine kinase-like ATPase, C-terminal domain"/>
    <property type="match status" value="1"/>
</dbReference>
<dbReference type="InterPro" id="IPR050980">
    <property type="entry name" value="2C_sensor_his_kinase"/>
</dbReference>
<dbReference type="InterPro" id="IPR003660">
    <property type="entry name" value="HAMP_dom"/>
</dbReference>
<dbReference type="InterPro" id="IPR036890">
    <property type="entry name" value="HATPase_C_sf"/>
</dbReference>
<dbReference type="InterPro" id="IPR005467">
    <property type="entry name" value="His_kinase_dom"/>
</dbReference>
<dbReference type="InterPro" id="IPR003661">
    <property type="entry name" value="HisK_dim/P_dom"/>
</dbReference>
<dbReference type="InterPro" id="IPR036097">
    <property type="entry name" value="HisK_dim/P_sf"/>
</dbReference>
<dbReference type="InterPro" id="IPR004358">
    <property type="entry name" value="Sig_transdc_His_kin-like_C"/>
</dbReference>
<dbReference type="PANTHER" id="PTHR44936">
    <property type="entry name" value="SENSOR PROTEIN CREC"/>
    <property type="match status" value="1"/>
</dbReference>
<dbReference type="PANTHER" id="PTHR44936:SF9">
    <property type="entry name" value="SENSOR PROTEIN CREC"/>
    <property type="match status" value="1"/>
</dbReference>
<dbReference type="Pfam" id="PF00672">
    <property type="entry name" value="HAMP"/>
    <property type="match status" value="1"/>
</dbReference>
<dbReference type="Pfam" id="PF02518">
    <property type="entry name" value="HATPase_c"/>
    <property type="match status" value="1"/>
</dbReference>
<dbReference type="Pfam" id="PF00512">
    <property type="entry name" value="HisKA"/>
    <property type="match status" value="1"/>
</dbReference>
<dbReference type="PRINTS" id="PR00344">
    <property type="entry name" value="BCTRLSENSOR"/>
</dbReference>
<dbReference type="SMART" id="SM00304">
    <property type="entry name" value="HAMP"/>
    <property type="match status" value="1"/>
</dbReference>
<dbReference type="SMART" id="SM00387">
    <property type="entry name" value="HATPase_c"/>
    <property type="match status" value="1"/>
</dbReference>
<dbReference type="SMART" id="SM00388">
    <property type="entry name" value="HisKA"/>
    <property type="match status" value="1"/>
</dbReference>
<dbReference type="SUPFAM" id="SSF55874">
    <property type="entry name" value="ATPase domain of HSP90 chaperone/DNA topoisomerase II/histidine kinase"/>
    <property type="match status" value="1"/>
</dbReference>
<dbReference type="SUPFAM" id="SSF158472">
    <property type="entry name" value="HAMP domain-like"/>
    <property type="match status" value="1"/>
</dbReference>
<dbReference type="SUPFAM" id="SSF47384">
    <property type="entry name" value="Homodimeric domain of signal transducing histidine kinase"/>
    <property type="match status" value="1"/>
</dbReference>
<dbReference type="PROSITE" id="PS50885">
    <property type="entry name" value="HAMP"/>
    <property type="match status" value="1"/>
</dbReference>
<dbReference type="PROSITE" id="PS50109">
    <property type="entry name" value="HIS_KIN"/>
    <property type="match status" value="1"/>
</dbReference>
<keyword id="KW-0067">ATP-binding</keyword>
<keyword id="KW-1003">Cell membrane</keyword>
<keyword id="KW-0378">Hydrolase</keyword>
<keyword id="KW-0418">Kinase</keyword>
<keyword id="KW-0460">Magnesium</keyword>
<keyword id="KW-0464">Manganese</keyword>
<keyword id="KW-0472">Membrane</keyword>
<keyword id="KW-0547">Nucleotide-binding</keyword>
<keyword id="KW-0597">Phosphoprotein</keyword>
<keyword id="KW-0904">Protein phosphatase</keyword>
<keyword id="KW-0346">Stress response</keyword>
<keyword id="KW-0808">Transferase</keyword>
<keyword id="KW-0812">Transmembrane</keyword>
<keyword id="KW-1133">Transmembrane helix</keyword>
<keyword id="KW-0902">Two-component regulatory system</keyword>
<keyword id="KW-0843">Virulence</keyword>
<name>MPRB_MYCVP</name>
<accession>A1TEL6</accession>
<sequence>MAADNAGRWPGQPPGPPAPTHPASSVSLRWRVMLLAMSMVVISVVLMAVAVFAVTSRALYDDIDNQLRSRAQMLIESRSLDIDPGKAIEGTAYSDMNAMFYIPGRSKYTANQQGQTLPVGQPEQDVMDGTLLLSLRTVEHQRVLAIRLASGNTLLLSKSLAPTGKVLKRLGTVLLIVGGLGVAVAAIAGGMVASAGLRPVGRLTQAAERVARTDDLRPIPVIGNDELARLTETFNMMLRALAESRERQARLVTDAGHELRTPLTSLRTNVELLMESMKPGAPRIPEEDMAELRTDVIAQIEEMSTLVGDLVDLTRDDAGNAVHETVEITEVIDRSLERVRRRRNDIQFDVAVTPWQVYGDAAGLGRAVLNLLDNAAKWSPPGGRVGVGLTQIDALHAELVVSDRGPGIPPQERALVFERFFRSTSARSMPGSGLGLAIVKQVVLKHGGTLRIEDTVPGGTPPGTAMHVVLPGRPSPAGSDEAER</sequence>
<evidence type="ECO:0000250" key="1"/>
<evidence type="ECO:0000255" key="2"/>
<evidence type="ECO:0000255" key="3">
    <source>
        <dbReference type="PROSITE-ProRule" id="PRU00102"/>
    </source>
</evidence>
<evidence type="ECO:0000255" key="4">
    <source>
        <dbReference type="PROSITE-ProRule" id="PRU00107"/>
    </source>
</evidence>
<evidence type="ECO:0000256" key="5">
    <source>
        <dbReference type="SAM" id="MobiDB-lite"/>
    </source>
</evidence>
<evidence type="ECO:0000305" key="6"/>
<feature type="chain" id="PRO_0000308443" description="Signal transduction histidine-protein kinase/phosphatase MprB">
    <location>
        <begin position="1"/>
        <end position="484"/>
    </location>
</feature>
<feature type="topological domain" description="Cytoplasmic" evidence="2">
    <location>
        <begin position="1"/>
        <end position="31"/>
    </location>
</feature>
<feature type="transmembrane region" description="Helical" evidence="2">
    <location>
        <begin position="32"/>
        <end position="52"/>
    </location>
</feature>
<feature type="topological domain" description="Extracellular" evidence="2">
    <location>
        <begin position="53"/>
        <end position="172"/>
    </location>
</feature>
<feature type="transmembrane region" description="Helical" evidence="2">
    <location>
        <begin position="173"/>
        <end position="193"/>
    </location>
</feature>
<feature type="topological domain" description="Cytoplasmic" evidence="2">
    <location>
        <begin position="194"/>
        <end position="484"/>
    </location>
</feature>
<feature type="domain" description="HAMP" evidence="3">
    <location>
        <begin position="194"/>
        <end position="246"/>
    </location>
</feature>
<feature type="domain" description="Histidine kinase" evidence="4">
    <location>
        <begin position="254"/>
        <end position="474"/>
    </location>
</feature>
<feature type="region of interest" description="Disordered" evidence="5">
    <location>
        <begin position="1"/>
        <end position="23"/>
    </location>
</feature>
<feature type="compositionally biased region" description="Low complexity" evidence="5">
    <location>
        <begin position="1"/>
        <end position="10"/>
    </location>
</feature>
<feature type="compositionally biased region" description="Pro residues" evidence="5">
    <location>
        <begin position="11"/>
        <end position="20"/>
    </location>
</feature>
<feature type="modified residue" description="Phosphohistidine; by autocatalysis" evidence="4">
    <location>
        <position position="257"/>
    </location>
</feature>
<proteinExistence type="inferred from homology"/>